<evidence type="ECO:0000255" key="1">
    <source>
        <dbReference type="HAMAP-Rule" id="MF_01356"/>
    </source>
</evidence>
<proteinExistence type="inferred from homology"/>
<dbReference type="EC" id="7.1.1.-" evidence="1"/>
<dbReference type="EMBL" id="CP000908">
    <property type="protein sequence ID" value="ABY29488.1"/>
    <property type="molecule type" value="Genomic_DNA"/>
</dbReference>
<dbReference type="RefSeq" id="WP_003598199.1">
    <property type="nucleotide sequence ID" value="NC_010172.1"/>
</dbReference>
<dbReference type="SMR" id="A9W1N2"/>
<dbReference type="KEGG" id="mex:Mext_1084"/>
<dbReference type="eggNOG" id="COG0377">
    <property type="taxonomic scope" value="Bacteria"/>
</dbReference>
<dbReference type="HOGENOM" id="CLU_055737_7_0_5"/>
<dbReference type="BioCyc" id="MEXT419610:MEXT_RS05440-MONOMER"/>
<dbReference type="GO" id="GO:0005886">
    <property type="term" value="C:plasma membrane"/>
    <property type="evidence" value="ECO:0007669"/>
    <property type="project" value="UniProtKB-SubCell"/>
</dbReference>
<dbReference type="GO" id="GO:0045271">
    <property type="term" value="C:respiratory chain complex I"/>
    <property type="evidence" value="ECO:0007669"/>
    <property type="project" value="TreeGrafter"/>
</dbReference>
<dbReference type="GO" id="GO:0051539">
    <property type="term" value="F:4 iron, 4 sulfur cluster binding"/>
    <property type="evidence" value="ECO:0007669"/>
    <property type="project" value="UniProtKB-KW"/>
</dbReference>
<dbReference type="GO" id="GO:0005506">
    <property type="term" value="F:iron ion binding"/>
    <property type="evidence" value="ECO:0007669"/>
    <property type="project" value="UniProtKB-UniRule"/>
</dbReference>
<dbReference type="GO" id="GO:0008137">
    <property type="term" value="F:NADH dehydrogenase (ubiquinone) activity"/>
    <property type="evidence" value="ECO:0007669"/>
    <property type="project" value="InterPro"/>
</dbReference>
<dbReference type="GO" id="GO:0050136">
    <property type="term" value="F:NADH:ubiquinone reductase (non-electrogenic) activity"/>
    <property type="evidence" value="ECO:0007669"/>
    <property type="project" value="UniProtKB-UniRule"/>
</dbReference>
<dbReference type="GO" id="GO:0048038">
    <property type="term" value="F:quinone binding"/>
    <property type="evidence" value="ECO:0007669"/>
    <property type="project" value="UniProtKB-KW"/>
</dbReference>
<dbReference type="GO" id="GO:0009060">
    <property type="term" value="P:aerobic respiration"/>
    <property type="evidence" value="ECO:0007669"/>
    <property type="project" value="TreeGrafter"/>
</dbReference>
<dbReference type="GO" id="GO:0015990">
    <property type="term" value="P:electron transport coupled proton transport"/>
    <property type="evidence" value="ECO:0007669"/>
    <property type="project" value="TreeGrafter"/>
</dbReference>
<dbReference type="FunFam" id="3.40.50.12280:FF:000001">
    <property type="entry name" value="NADH-quinone oxidoreductase subunit B 2"/>
    <property type="match status" value="1"/>
</dbReference>
<dbReference type="Gene3D" id="3.40.50.12280">
    <property type="match status" value="1"/>
</dbReference>
<dbReference type="HAMAP" id="MF_01356">
    <property type="entry name" value="NDH1_NuoB"/>
    <property type="match status" value="1"/>
</dbReference>
<dbReference type="InterPro" id="IPR006137">
    <property type="entry name" value="NADH_UbQ_OxRdtase-like_20kDa"/>
</dbReference>
<dbReference type="InterPro" id="IPR006138">
    <property type="entry name" value="NADH_UQ_OxRdtase_20Kd_su"/>
</dbReference>
<dbReference type="NCBIfam" id="TIGR01957">
    <property type="entry name" value="nuoB_fam"/>
    <property type="match status" value="1"/>
</dbReference>
<dbReference type="NCBIfam" id="NF005012">
    <property type="entry name" value="PRK06411.1"/>
    <property type="match status" value="1"/>
</dbReference>
<dbReference type="PANTHER" id="PTHR11995">
    <property type="entry name" value="NADH DEHYDROGENASE"/>
    <property type="match status" value="1"/>
</dbReference>
<dbReference type="PANTHER" id="PTHR11995:SF14">
    <property type="entry name" value="NADH DEHYDROGENASE [UBIQUINONE] IRON-SULFUR PROTEIN 7, MITOCHONDRIAL"/>
    <property type="match status" value="1"/>
</dbReference>
<dbReference type="Pfam" id="PF01058">
    <property type="entry name" value="Oxidored_q6"/>
    <property type="match status" value="1"/>
</dbReference>
<dbReference type="SUPFAM" id="SSF56770">
    <property type="entry name" value="HydA/Nqo6-like"/>
    <property type="match status" value="1"/>
</dbReference>
<dbReference type="PROSITE" id="PS01150">
    <property type="entry name" value="COMPLEX1_20K"/>
    <property type="match status" value="1"/>
</dbReference>
<sequence>MALTPTFSRAPDIAPAPKGIIDPATGRPIGANDPTFLSINDELADRGFLVTSADELINWARTGSLMWMTFGLACCAVEMMQMSMPRYDCERFGFAPRGSPRQSDVMIVAGTLTNKMAPALRKVYDQMPEPRYVISMGSCANGGGYYHYSYSVVRGCDRVVPVDIYVPGCPPSAEALLYGVLLLQRKIRRIGTIER</sequence>
<feature type="chain" id="PRO_0000376267" description="NADH-quinone oxidoreductase subunit B">
    <location>
        <begin position="1"/>
        <end position="195"/>
    </location>
</feature>
<feature type="binding site" evidence="1">
    <location>
        <position position="74"/>
    </location>
    <ligand>
        <name>[4Fe-4S] cluster</name>
        <dbReference type="ChEBI" id="CHEBI:49883"/>
    </ligand>
</feature>
<feature type="binding site" evidence="1">
    <location>
        <position position="75"/>
    </location>
    <ligand>
        <name>[4Fe-4S] cluster</name>
        <dbReference type="ChEBI" id="CHEBI:49883"/>
    </ligand>
</feature>
<feature type="binding site" evidence="1">
    <location>
        <position position="139"/>
    </location>
    <ligand>
        <name>[4Fe-4S] cluster</name>
        <dbReference type="ChEBI" id="CHEBI:49883"/>
    </ligand>
</feature>
<feature type="binding site" evidence="1">
    <location>
        <position position="169"/>
    </location>
    <ligand>
        <name>[4Fe-4S] cluster</name>
        <dbReference type="ChEBI" id="CHEBI:49883"/>
    </ligand>
</feature>
<keyword id="KW-0004">4Fe-4S</keyword>
<keyword id="KW-0997">Cell inner membrane</keyword>
<keyword id="KW-1003">Cell membrane</keyword>
<keyword id="KW-0408">Iron</keyword>
<keyword id="KW-0411">Iron-sulfur</keyword>
<keyword id="KW-0472">Membrane</keyword>
<keyword id="KW-0479">Metal-binding</keyword>
<keyword id="KW-0520">NAD</keyword>
<keyword id="KW-0874">Quinone</keyword>
<keyword id="KW-1278">Translocase</keyword>
<keyword id="KW-0813">Transport</keyword>
<keyword id="KW-0830">Ubiquinone</keyword>
<comment type="function">
    <text evidence="1">NDH-1 shuttles electrons from NADH, via FMN and iron-sulfur (Fe-S) centers, to quinones in the respiratory chain. The immediate electron acceptor for the enzyme in this species is believed to be ubiquinone. Couples the redox reaction to proton translocation (for every two electrons transferred, four hydrogen ions are translocated across the cytoplasmic membrane), and thus conserves the redox energy in a proton gradient.</text>
</comment>
<comment type="catalytic activity">
    <reaction evidence="1">
        <text>a quinone + NADH + 5 H(+)(in) = a quinol + NAD(+) + 4 H(+)(out)</text>
        <dbReference type="Rhea" id="RHEA:57888"/>
        <dbReference type="ChEBI" id="CHEBI:15378"/>
        <dbReference type="ChEBI" id="CHEBI:24646"/>
        <dbReference type="ChEBI" id="CHEBI:57540"/>
        <dbReference type="ChEBI" id="CHEBI:57945"/>
        <dbReference type="ChEBI" id="CHEBI:132124"/>
    </reaction>
</comment>
<comment type="cofactor">
    <cofactor evidence="1">
        <name>[4Fe-4S] cluster</name>
        <dbReference type="ChEBI" id="CHEBI:49883"/>
    </cofactor>
    <text evidence="1">Binds 1 [4Fe-4S] cluster.</text>
</comment>
<comment type="subunit">
    <text evidence="1">NDH-1 is composed of 14 different subunits. Subunits NuoB, C, D, E, F, and G constitute the peripheral sector of the complex.</text>
</comment>
<comment type="subcellular location">
    <subcellularLocation>
        <location evidence="1">Cell inner membrane</location>
        <topology evidence="1">Peripheral membrane protein</topology>
        <orientation evidence="1">Cytoplasmic side</orientation>
    </subcellularLocation>
</comment>
<comment type="similarity">
    <text evidence="1">Belongs to the complex I 20 kDa subunit family.</text>
</comment>
<reference key="1">
    <citation type="submission" date="2007-12" db="EMBL/GenBank/DDBJ databases">
        <title>Complete sequence of Methylobacterium extorquens PA1.</title>
        <authorList>
            <consortium name="US DOE Joint Genome Institute"/>
            <person name="Copeland A."/>
            <person name="Lucas S."/>
            <person name="Lapidus A."/>
            <person name="Barry K."/>
            <person name="Glavina del Rio T."/>
            <person name="Dalin E."/>
            <person name="Tice H."/>
            <person name="Pitluck S."/>
            <person name="Saunders E."/>
            <person name="Brettin T."/>
            <person name="Bruce D."/>
            <person name="Detter J.C."/>
            <person name="Han C."/>
            <person name="Schmutz J."/>
            <person name="Larimer F."/>
            <person name="Land M."/>
            <person name="Hauser L."/>
            <person name="Kyrpides N."/>
            <person name="Kim E."/>
            <person name="Marx C."/>
            <person name="Richardson P."/>
        </authorList>
    </citation>
    <scope>NUCLEOTIDE SEQUENCE [LARGE SCALE GENOMIC DNA]</scope>
    <source>
        <strain>PA1</strain>
    </source>
</reference>
<organism>
    <name type="scientific">Methylorubrum extorquens (strain PA1)</name>
    <name type="common">Methylobacterium extorquens</name>
    <dbReference type="NCBI Taxonomy" id="419610"/>
    <lineage>
        <taxon>Bacteria</taxon>
        <taxon>Pseudomonadati</taxon>
        <taxon>Pseudomonadota</taxon>
        <taxon>Alphaproteobacteria</taxon>
        <taxon>Hyphomicrobiales</taxon>
        <taxon>Methylobacteriaceae</taxon>
        <taxon>Methylorubrum</taxon>
    </lineage>
</organism>
<accession>A9W1N2</accession>
<protein>
    <recommendedName>
        <fullName evidence="1">NADH-quinone oxidoreductase subunit B</fullName>
        <ecNumber evidence="1">7.1.1.-</ecNumber>
    </recommendedName>
    <alternativeName>
        <fullName evidence="1">NADH dehydrogenase I subunit B</fullName>
    </alternativeName>
    <alternativeName>
        <fullName evidence="1">NDH-1 subunit B</fullName>
    </alternativeName>
</protein>
<name>NUOB_METEP</name>
<gene>
    <name evidence="1" type="primary">nuoB</name>
    <name type="ordered locus">Mext_1084</name>
</gene>